<proteinExistence type="inferred from homology"/>
<evidence type="ECO:0000255" key="1">
    <source>
        <dbReference type="HAMAP-Rule" id="MF_00461"/>
    </source>
</evidence>
<evidence type="ECO:0000256" key="2">
    <source>
        <dbReference type="SAM" id="MobiDB-lite"/>
    </source>
</evidence>
<name>RSXC_SALPC</name>
<keyword id="KW-0004">4Fe-4S</keyword>
<keyword id="KW-0997">Cell inner membrane</keyword>
<keyword id="KW-1003">Cell membrane</keyword>
<keyword id="KW-0249">Electron transport</keyword>
<keyword id="KW-0408">Iron</keyword>
<keyword id="KW-0411">Iron-sulfur</keyword>
<keyword id="KW-0472">Membrane</keyword>
<keyword id="KW-0479">Metal-binding</keyword>
<keyword id="KW-0677">Repeat</keyword>
<keyword id="KW-1278">Translocase</keyword>
<keyword id="KW-0813">Transport</keyword>
<feature type="chain" id="PRO_1000194521" description="Ion-translocating oxidoreductase complex subunit C">
    <location>
        <begin position="1"/>
        <end position="704"/>
    </location>
</feature>
<feature type="domain" description="4Fe-4S ferredoxin-type 1" evidence="1">
    <location>
        <begin position="368"/>
        <end position="397"/>
    </location>
</feature>
<feature type="domain" description="4Fe-4S ferredoxin-type 2" evidence="1">
    <location>
        <begin position="407"/>
        <end position="436"/>
    </location>
</feature>
<feature type="region of interest" description="Disordered" evidence="2">
    <location>
        <begin position="535"/>
        <end position="684"/>
    </location>
</feature>
<feature type="compositionally biased region" description="Low complexity" evidence="2">
    <location>
        <begin position="556"/>
        <end position="565"/>
    </location>
</feature>
<feature type="binding site" evidence="1">
    <location>
        <position position="377"/>
    </location>
    <ligand>
        <name>[4Fe-4S] cluster</name>
        <dbReference type="ChEBI" id="CHEBI:49883"/>
        <label>1</label>
    </ligand>
</feature>
<feature type="binding site" evidence="1">
    <location>
        <position position="380"/>
    </location>
    <ligand>
        <name>[4Fe-4S] cluster</name>
        <dbReference type="ChEBI" id="CHEBI:49883"/>
        <label>1</label>
    </ligand>
</feature>
<feature type="binding site" evidence="1">
    <location>
        <position position="383"/>
    </location>
    <ligand>
        <name>[4Fe-4S] cluster</name>
        <dbReference type="ChEBI" id="CHEBI:49883"/>
        <label>1</label>
    </ligand>
</feature>
<feature type="binding site" evidence="1">
    <location>
        <position position="387"/>
    </location>
    <ligand>
        <name>[4Fe-4S] cluster</name>
        <dbReference type="ChEBI" id="CHEBI:49883"/>
        <label>2</label>
    </ligand>
</feature>
<feature type="binding site" evidence="1">
    <location>
        <position position="416"/>
    </location>
    <ligand>
        <name>[4Fe-4S] cluster</name>
        <dbReference type="ChEBI" id="CHEBI:49883"/>
        <label>2</label>
    </ligand>
</feature>
<feature type="binding site" evidence="1">
    <location>
        <position position="419"/>
    </location>
    <ligand>
        <name>[4Fe-4S] cluster</name>
        <dbReference type="ChEBI" id="CHEBI:49883"/>
        <label>2</label>
    </ligand>
</feature>
<feature type="binding site" evidence="1">
    <location>
        <position position="422"/>
    </location>
    <ligand>
        <name>[4Fe-4S] cluster</name>
        <dbReference type="ChEBI" id="CHEBI:49883"/>
        <label>2</label>
    </ligand>
</feature>
<feature type="binding site" evidence="1">
    <location>
        <position position="426"/>
    </location>
    <ligand>
        <name>[4Fe-4S] cluster</name>
        <dbReference type="ChEBI" id="CHEBI:49883"/>
        <label>1</label>
    </ligand>
</feature>
<comment type="function">
    <text evidence="1">Part of a membrane-bound complex that couples electron transfer with translocation of ions across the membrane. Required to maintain the reduced state of SoxR.</text>
</comment>
<comment type="cofactor">
    <cofactor evidence="1">
        <name>[4Fe-4S] cluster</name>
        <dbReference type="ChEBI" id="CHEBI:49883"/>
    </cofactor>
    <text evidence="1">Binds 2 [4Fe-4S] clusters per subunit.</text>
</comment>
<comment type="subunit">
    <text evidence="1">The complex is composed of six subunits: RsxA, RsxB, RsxC, RsxD, RsxE and RsxG.</text>
</comment>
<comment type="subcellular location">
    <subcellularLocation>
        <location evidence="1">Cell inner membrane</location>
        <topology evidence="1">Peripheral membrane protein</topology>
    </subcellularLocation>
</comment>
<comment type="similarity">
    <text evidence="1">Belongs to the 4Fe4S bacterial-type ferredoxin family. RnfC subfamily.</text>
</comment>
<reference key="1">
    <citation type="journal article" date="2009" name="PLoS ONE">
        <title>Salmonella paratyphi C: genetic divergence from Salmonella choleraesuis and pathogenic convergence with Salmonella typhi.</title>
        <authorList>
            <person name="Liu W.-Q."/>
            <person name="Feng Y."/>
            <person name="Wang Y."/>
            <person name="Zou Q.-H."/>
            <person name="Chen F."/>
            <person name="Guo J.-T."/>
            <person name="Peng Y.-H."/>
            <person name="Jin Y."/>
            <person name="Li Y.-G."/>
            <person name="Hu S.-N."/>
            <person name="Johnston R.N."/>
            <person name="Liu G.-R."/>
            <person name="Liu S.-L."/>
        </authorList>
    </citation>
    <scope>NUCLEOTIDE SEQUENCE [LARGE SCALE GENOMIC DNA]</scope>
    <source>
        <strain>RKS4594</strain>
    </source>
</reference>
<protein>
    <recommendedName>
        <fullName evidence="1">Ion-translocating oxidoreductase complex subunit C</fullName>
        <ecNumber evidence="1">7.-.-.-</ecNumber>
    </recommendedName>
    <alternativeName>
        <fullName evidence="1">Rsx electron transport complex subunit C</fullName>
    </alternativeName>
</protein>
<dbReference type="EC" id="7.-.-.-" evidence="1"/>
<dbReference type="EMBL" id="CP000857">
    <property type="protein sequence ID" value="ACN46391.1"/>
    <property type="molecule type" value="Genomic_DNA"/>
</dbReference>
<dbReference type="RefSeq" id="WP_000915643.1">
    <property type="nucleotide sequence ID" value="NC_012125.1"/>
</dbReference>
<dbReference type="SMR" id="C0Q508"/>
<dbReference type="KEGG" id="sei:SPC_2274"/>
<dbReference type="HOGENOM" id="CLU_010808_2_1_6"/>
<dbReference type="Proteomes" id="UP000001599">
    <property type="component" value="Chromosome"/>
</dbReference>
<dbReference type="GO" id="GO:0005886">
    <property type="term" value="C:plasma membrane"/>
    <property type="evidence" value="ECO:0007669"/>
    <property type="project" value="UniProtKB-SubCell"/>
</dbReference>
<dbReference type="GO" id="GO:0051539">
    <property type="term" value="F:4 iron, 4 sulfur cluster binding"/>
    <property type="evidence" value="ECO:0007669"/>
    <property type="project" value="UniProtKB-KW"/>
</dbReference>
<dbReference type="GO" id="GO:0009055">
    <property type="term" value="F:electron transfer activity"/>
    <property type="evidence" value="ECO:0007669"/>
    <property type="project" value="InterPro"/>
</dbReference>
<dbReference type="GO" id="GO:0046872">
    <property type="term" value="F:metal ion binding"/>
    <property type="evidence" value="ECO:0007669"/>
    <property type="project" value="UniProtKB-KW"/>
</dbReference>
<dbReference type="GO" id="GO:0022900">
    <property type="term" value="P:electron transport chain"/>
    <property type="evidence" value="ECO:0007669"/>
    <property type="project" value="UniProtKB-UniRule"/>
</dbReference>
<dbReference type="Gene3D" id="3.30.70.20">
    <property type="match status" value="1"/>
</dbReference>
<dbReference type="Gene3D" id="3.40.50.11540">
    <property type="entry name" value="NADH-ubiquinone oxidoreductase 51kDa subunit"/>
    <property type="match status" value="1"/>
</dbReference>
<dbReference type="HAMAP" id="MF_00461">
    <property type="entry name" value="RsxC_RnfC"/>
    <property type="match status" value="1"/>
</dbReference>
<dbReference type="InterPro" id="IPR017896">
    <property type="entry name" value="4Fe4S_Fe-S-bd"/>
</dbReference>
<dbReference type="InterPro" id="IPR017900">
    <property type="entry name" value="4Fe4S_Fe_S_CS"/>
</dbReference>
<dbReference type="InterPro" id="IPR010208">
    <property type="entry name" value="Ion_transpt_RnfC/RsxC"/>
</dbReference>
<dbReference type="InterPro" id="IPR011538">
    <property type="entry name" value="Nuo51_FMN-bd"/>
</dbReference>
<dbReference type="InterPro" id="IPR037225">
    <property type="entry name" value="Nuo51_FMN-bd_sf"/>
</dbReference>
<dbReference type="InterPro" id="IPR026902">
    <property type="entry name" value="RnfC_N"/>
</dbReference>
<dbReference type="InterPro" id="IPR019554">
    <property type="entry name" value="Soluble_ligand-bd"/>
</dbReference>
<dbReference type="NCBIfam" id="NF003454">
    <property type="entry name" value="PRK05035.1"/>
    <property type="match status" value="1"/>
</dbReference>
<dbReference type="NCBIfam" id="TIGR01945">
    <property type="entry name" value="rnfC"/>
    <property type="match status" value="1"/>
</dbReference>
<dbReference type="PANTHER" id="PTHR43034">
    <property type="entry name" value="ION-TRANSLOCATING OXIDOREDUCTASE COMPLEX SUBUNIT C"/>
    <property type="match status" value="1"/>
</dbReference>
<dbReference type="PANTHER" id="PTHR43034:SF2">
    <property type="entry name" value="ION-TRANSLOCATING OXIDOREDUCTASE COMPLEX SUBUNIT C"/>
    <property type="match status" value="1"/>
</dbReference>
<dbReference type="Pfam" id="PF01512">
    <property type="entry name" value="Complex1_51K"/>
    <property type="match status" value="1"/>
</dbReference>
<dbReference type="Pfam" id="PF12838">
    <property type="entry name" value="Fer4_7"/>
    <property type="match status" value="1"/>
</dbReference>
<dbReference type="Pfam" id="PF13375">
    <property type="entry name" value="RnfC_N"/>
    <property type="match status" value="1"/>
</dbReference>
<dbReference type="Pfam" id="PF10531">
    <property type="entry name" value="SLBB"/>
    <property type="match status" value="1"/>
</dbReference>
<dbReference type="SUPFAM" id="SSF46548">
    <property type="entry name" value="alpha-helical ferredoxin"/>
    <property type="match status" value="1"/>
</dbReference>
<dbReference type="SUPFAM" id="SSF142019">
    <property type="entry name" value="Nqo1 FMN-binding domain-like"/>
    <property type="match status" value="1"/>
</dbReference>
<dbReference type="PROSITE" id="PS00198">
    <property type="entry name" value="4FE4S_FER_1"/>
    <property type="match status" value="2"/>
</dbReference>
<dbReference type="PROSITE" id="PS51379">
    <property type="entry name" value="4FE4S_FER_2"/>
    <property type="match status" value="2"/>
</dbReference>
<organism>
    <name type="scientific">Salmonella paratyphi C (strain RKS4594)</name>
    <dbReference type="NCBI Taxonomy" id="476213"/>
    <lineage>
        <taxon>Bacteria</taxon>
        <taxon>Pseudomonadati</taxon>
        <taxon>Pseudomonadota</taxon>
        <taxon>Gammaproteobacteria</taxon>
        <taxon>Enterobacterales</taxon>
        <taxon>Enterobacteriaceae</taxon>
        <taxon>Salmonella</taxon>
    </lineage>
</organism>
<sequence length="704" mass="75410">MLKLFSAFRKDKIWDFDGGIHPPEMKTQSNGTPLRQVPLAPRFVIPLKQHIGAEGELCVSVGDRVLRGQALTRGRGRMLPVHAPTSGTVIAIAPHSTAHPSALAELSVIIDADGEDRWIEREGWSDYRAHSREALIERIHQYGVAGLGGAGFPTGVKLQGGGDKITTLIINAAECEPYITADDRLMQDCAAQIVEGIRILAHILQPREVLIGIEDNKPQAISMLRAVLADAHDISLRVIPTKYPSGGAKQLTQILTGKQVPHGGRSSDIGVLMQNVGTAYAVKRAVVDGEPITERVVTLTGEAVSRPGNVWARLGTPVRHLLNDAGFCPSADQMVIMGGPLMGFTLPWLDVPVVKITNCLLAPSVAEMGAPQEEKSCIRCSACADACPADLLPQQLYWFSKGQQHDKATAHHIADCIECGACAWVCPSNIPLVQYFRQEKAEINAIRLEEKRAAEAKARFEARQARLEREKAARLARHKSAAVQPAAKDQDAIAAALARVKEKQAQATQPVVIQAGSQPDNSAVIAAREARKAQARAKQAAHPMADSAIPGDDPSKAAVEAAIARAKARKQEQQAGSEPVEAVDPRKAAVEAAIARAKARKQEQQTGSEPAEPIDPRKAAVEAAIARAKARKQEQQTGSEPAEPIDPRKAAVEAAIARAKARKQEQQAGSEPAEPADPRKAAVAAAIARVQAKKAAQQQVVNED</sequence>
<accession>C0Q508</accession>
<gene>
    <name evidence="1" type="primary">rsxC</name>
    <name type="synonym">rnfC</name>
    <name type="ordered locus">SPC_2274</name>
</gene>